<gene>
    <name type="primary">Rh3</name>
    <name type="synonym">RH92CD</name>
    <name type="ORF">CG10888</name>
</gene>
<name>OPS3_DROME</name>
<accession>P04950</accession>
<accession>Q9TX53</accession>
<organism>
    <name type="scientific">Drosophila melanogaster</name>
    <name type="common">Fruit fly</name>
    <dbReference type="NCBI Taxonomy" id="7227"/>
    <lineage>
        <taxon>Eukaryota</taxon>
        <taxon>Metazoa</taxon>
        <taxon>Ecdysozoa</taxon>
        <taxon>Arthropoda</taxon>
        <taxon>Hexapoda</taxon>
        <taxon>Insecta</taxon>
        <taxon>Pterygota</taxon>
        <taxon>Neoptera</taxon>
        <taxon>Endopterygota</taxon>
        <taxon>Diptera</taxon>
        <taxon>Brachycera</taxon>
        <taxon>Muscomorpha</taxon>
        <taxon>Ephydroidea</taxon>
        <taxon>Drosophilidae</taxon>
        <taxon>Drosophila</taxon>
        <taxon>Sophophora</taxon>
    </lineage>
</organism>
<feature type="chain" id="PRO_0000197627" description="Opsin Rh3">
    <location>
        <begin position="1"/>
        <end position="383"/>
    </location>
</feature>
<feature type="topological domain" description="Extracellular">
    <location>
        <begin position="1"/>
        <end position="57"/>
    </location>
</feature>
<feature type="transmembrane region" description="Helical; Name=1" evidence="1">
    <location>
        <begin position="58"/>
        <end position="82"/>
    </location>
</feature>
<feature type="topological domain" description="Cytoplasmic">
    <location>
        <begin position="83"/>
        <end position="94"/>
    </location>
</feature>
<feature type="transmembrane region" description="Helical; Name=2" evidence="1">
    <location>
        <begin position="95"/>
        <end position="119"/>
    </location>
</feature>
<feature type="topological domain" description="Extracellular">
    <location>
        <begin position="120"/>
        <end position="133"/>
    </location>
</feature>
<feature type="transmembrane region" description="Helical; Name=3" evidence="1">
    <location>
        <begin position="134"/>
        <end position="153"/>
    </location>
</feature>
<feature type="topological domain" description="Cytoplasmic">
    <location>
        <begin position="154"/>
        <end position="171"/>
    </location>
</feature>
<feature type="transmembrane region" description="Helical; Name=4" evidence="1">
    <location>
        <begin position="172"/>
        <end position="196"/>
    </location>
</feature>
<feature type="topological domain" description="Extracellular">
    <location>
        <begin position="197"/>
        <end position="220"/>
    </location>
</feature>
<feature type="transmembrane region" description="Helical; Name=5" evidence="1">
    <location>
        <begin position="221"/>
        <end position="248"/>
    </location>
</feature>
<feature type="topological domain" description="Cytoplasmic">
    <location>
        <begin position="249"/>
        <end position="284"/>
    </location>
</feature>
<feature type="transmembrane region" description="Helical; Name=6" evidence="1">
    <location>
        <begin position="285"/>
        <end position="308"/>
    </location>
</feature>
<feature type="topological domain" description="Extracellular">
    <location>
        <begin position="309"/>
        <end position="316"/>
    </location>
</feature>
<feature type="transmembrane region" description="Helical; Name=7" evidence="1">
    <location>
        <begin position="317"/>
        <end position="341"/>
    </location>
</feature>
<feature type="topological domain" description="Cytoplasmic">
    <location>
        <begin position="342"/>
        <end position="383"/>
    </location>
</feature>
<feature type="region of interest" description="Disordered" evidence="3">
    <location>
        <begin position="362"/>
        <end position="383"/>
    </location>
</feature>
<feature type="compositionally biased region" description="Low complexity" evidence="3">
    <location>
        <begin position="369"/>
        <end position="383"/>
    </location>
</feature>
<feature type="modified residue" description="N6-(retinylidene)lysine">
    <location>
        <position position="328"/>
    </location>
</feature>
<feature type="glycosylation site" description="N-linked (GlcNAc...) asparagine" evidence="4">
    <location>
        <position position="13"/>
    </location>
</feature>
<feature type="disulfide bond" evidence="2">
    <location>
        <begin position="130"/>
        <end position="207"/>
    </location>
</feature>
<evidence type="ECO:0000255" key="1"/>
<evidence type="ECO:0000255" key="2">
    <source>
        <dbReference type="PROSITE-ProRule" id="PRU00521"/>
    </source>
</evidence>
<evidence type="ECO:0000256" key="3">
    <source>
        <dbReference type="SAM" id="MobiDB-lite"/>
    </source>
</evidence>
<evidence type="ECO:0000305" key="4"/>
<protein>
    <recommendedName>
        <fullName>Opsin Rh3</fullName>
    </recommendedName>
    <alternativeName>
        <fullName>Inner R7 photoreceptor cells opsin</fullName>
    </alternativeName>
</protein>
<comment type="function">
    <text>Visual pigments are the light-absorbing molecules that mediate vision. They consist of an apoprotein, opsin, covalently linked to cis-retinal.</text>
</comment>
<comment type="subcellular location">
    <subcellularLocation>
        <location>Membrane</location>
        <topology>Multi-pass membrane protein</topology>
    </subcellularLocation>
</comment>
<comment type="PTM">
    <text>Phosphorylated on some or all of the serine and threonine residues present in the C-terminal region.</text>
</comment>
<comment type="miscellaneous">
    <text>Each Drosophila eye is composed of 800 facets or ommatidia. Each ommatidium contains 8 photoreceptor cells (R1-R8), the R1 to R6 cells are outer cells, while R7 and R8 are inner cells.</text>
</comment>
<comment type="miscellaneous">
    <text>Opsin Rh3 is sensitive to UV light.</text>
</comment>
<comment type="similarity">
    <text evidence="2">Belongs to the G-protein coupled receptor 1 family. Opsin subfamily.</text>
</comment>
<reference key="1">
    <citation type="journal article" date="1987" name="EMBO J.">
        <title>An opsin gene that is expressed only in the R7 photoreceptor cell of Drosophila.</title>
        <authorList>
            <person name="Fryxell K.J."/>
            <person name="Meyerowitz E.M."/>
        </authorList>
    </citation>
    <scope>NUCLEOTIDE SEQUENCE [GENOMIC DNA]</scope>
    <source>
        <strain>Canton-S</strain>
    </source>
</reference>
<reference key="2">
    <citation type="journal article" date="1987" name="J. Neurosci.">
        <title>A rhodopsin gene expressed in photoreceptor cell R7 of the Drosophila eye: homologies with other signal-transducing molecules.</title>
        <authorList>
            <person name="Zuker C.S."/>
            <person name="Montell C."/>
            <person name="Jones K."/>
            <person name="Laverty T."/>
            <person name="Rubin G.M."/>
        </authorList>
    </citation>
    <scope>NUCLEOTIDE SEQUENCE [GENOMIC DNA]</scope>
</reference>
<reference key="3">
    <citation type="journal article" date="2000" name="Science">
        <title>The genome sequence of Drosophila melanogaster.</title>
        <authorList>
            <person name="Adams M.D."/>
            <person name="Celniker S.E."/>
            <person name="Holt R.A."/>
            <person name="Evans C.A."/>
            <person name="Gocayne J.D."/>
            <person name="Amanatides P.G."/>
            <person name="Scherer S.E."/>
            <person name="Li P.W."/>
            <person name="Hoskins R.A."/>
            <person name="Galle R.F."/>
            <person name="George R.A."/>
            <person name="Lewis S.E."/>
            <person name="Richards S."/>
            <person name="Ashburner M."/>
            <person name="Henderson S.N."/>
            <person name="Sutton G.G."/>
            <person name="Wortman J.R."/>
            <person name="Yandell M.D."/>
            <person name="Zhang Q."/>
            <person name="Chen L.X."/>
            <person name="Brandon R.C."/>
            <person name="Rogers Y.-H.C."/>
            <person name="Blazej R.G."/>
            <person name="Champe M."/>
            <person name="Pfeiffer B.D."/>
            <person name="Wan K.H."/>
            <person name="Doyle C."/>
            <person name="Baxter E.G."/>
            <person name="Helt G."/>
            <person name="Nelson C.R."/>
            <person name="Miklos G.L.G."/>
            <person name="Abril J.F."/>
            <person name="Agbayani A."/>
            <person name="An H.-J."/>
            <person name="Andrews-Pfannkoch C."/>
            <person name="Baldwin D."/>
            <person name="Ballew R.M."/>
            <person name="Basu A."/>
            <person name="Baxendale J."/>
            <person name="Bayraktaroglu L."/>
            <person name="Beasley E.M."/>
            <person name="Beeson K.Y."/>
            <person name="Benos P.V."/>
            <person name="Berman B.P."/>
            <person name="Bhandari D."/>
            <person name="Bolshakov S."/>
            <person name="Borkova D."/>
            <person name="Botchan M.R."/>
            <person name="Bouck J."/>
            <person name="Brokstein P."/>
            <person name="Brottier P."/>
            <person name="Burtis K.C."/>
            <person name="Busam D.A."/>
            <person name="Butler H."/>
            <person name="Cadieu E."/>
            <person name="Center A."/>
            <person name="Chandra I."/>
            <person name="Cherry J.M."/>
            <person name="Cawley S."/>
            <person name="Dahlke C."/>
            <person name="Davenport L.B."/>
            <person name="Davies P."/>
            <person name="de Pablos B."/>
            <person name="Delcher A."/>
            <person name="Deng Z."/>
            <person name="Mays A.D."/>
            <person name="Dew I."/>
            <person name="Dietz S.M."/>
            <person name="Dodson K."/>
            <person name="Doup L.E."/>
            <person name="Downes M."/>
            <person name="Dugan-Rocha S."/>
            <person name="Dunkov B.C."/>
            <person name="Dunn P."/>
            <person name="Durbin K.J."/>
            <person name="Evangelista C.C."/>
            <person name="Ferraz C."/>
            <person name="Ferriera S."/>
            <person name="Fleischmann W."/>
            <person name="Fosler C."/>
            <person name="Gabrielian A.E."/>
            <person name="Garg N.S."/>
            <person name="Gelbart W.M."/>
            <person name="Glasser K."/>
            <person name="Glodek A."/>
            <person name="Gong F."/>
            <person name="Gorrell J.H."/>
            <person name="Gu Z."/>
            <person name="Guan P."/>
            <person name="Harris M."/>
            <person name="Harris N.L."/>
            <person name="Harvey D.A."/>
            <person name="Heiman T.J."/>
            <person name="Hernandez J.R."/>
            <person name="Houck J."/>
            <person name="Hostin D."/>
            <person name="Houston K.A."/>
            <person name="Howland T.J."/>
            <person name="Wei M.-H."/>
            <person name="Ibegwam C."/>
            <person name="Jalali M."/>
            <person name="Kalush F."/>
            <person name="Karpen G.H."/>
            <person name="Ke Z."/>
            <person name="Kennison J.A."/>
            <person name="Ketchum K.A."/>
            <person name="Kimmel B.E."/>
            <person name="Kodira C.D."/>
            <person name="Kraft C.L."/>
            <person name="Kravitz S."/>
            <person name="Kulp D."/>
            <person name="Lai Z."/>
            <person name="Lasko P."/>
            <person name="Lei Y."/>
            <person name="Levitsky A.A."/>
            <person name="Li J.H."/>
            <person name="Li Z."/>
            <person name="Liang Y."/>
            <person name="Lin X."/>
            <person name="Liu X."/>
            <person name="Mattei B."/>
            <person name="McIntosh T.C."/>
            <person name="McLeod M.P."/>
            <person name="McPherson D."/>
            <person name="Merkulov G."/>
            <person name="Milshina N.V."/>
            <person name="Mobarry C."/>
            <person name="Morris J."/>
            <person name="Moshrefi A."/>
            <person name="Mount S.M."/>
            <person name="Moy M."/>
            <person name="Murphy B."/>
            <person name="Murphy L."/>
            <person name="Muzny D.M."/>
            <person name="Nelson D.L."/>
            <person name="Nelson D.R."/>
            <person name="Nelson K.A."/>
            <person name="Nixon K."/>
            <person name="Nusskern D.R."/>
            <person name="Pacleb J.M."/>
            <person name="Palazzolo M."/>
            <person name="Pittman G.S."/>
            <person name="Pan S."/>
            <person name="Pollard J."/>
            <person name="Puri V."/>
            <person name="Reese M.G."/>
            <person name="Reinert K."/>
            <person name="Remington K."/>
            <person name="Saunders R.D.C."/>
            <person name="Scheeler F."/>
            <person name="Shen H."/>
            <person name="Shue B.C."/>
            <person name="Siden-Kiamos I."/>
            <person name="Simpson M."/>
            <person name="Skupski M.P."/>
            <person name="Smith T.J."/>
            <person name="Spier E."/>
            <person name="Spradling A.C."/>
            <person name="Stapleton M."/>
            <person name="Strong R."/>
            <person name="Sun E."/>
            <person name="Svirskas R."/>
            <person name="Tector C."/>
            <person name="Turner R."/>
            <person name="Venter E."/>
            <person name="Wang A.H."/>
            <person name="Wang X."/>
            <person name="Wang Z.-Y."/>
            <person name="Wassarman D.A."/>
            <person name="Weinstock G.M."/>
            <person name="Weissenbach J."/>
            <person name="Williams S.M."/>
            <person name="Woodage T."/>
            <person name="Worley K.C."/>
            <person name="Wu D."/>
            <person name="Yang S."/>
            <person name="Yao Q.A."/>
            <person name="Ye J."/>
            <person name="Yeh R.-F."/>
            <person name="Zaveri J.S."/>
            <person name="Zhan M."/>
            <person name="Zhang G."/>
            <person name="Zhao Q."/>
            <person name="Zheng L."/>
            <person name="Zheng X.H."/>
            <person name="Zhong F.N."/>
            <person name="Zhong W."/>
            <person name="Zhou X."/>
            <person name="Zhu S.C."/>
            <person name="Zhu X."/>
            <person name="Smith H.O."/>
            <person name="Gibbs R.A."/>
            <person name="Myers E.W."/>
            <person name="Rubin G.M."/>
            <person name="Venter J.C."/>
        </authorList>
    </citation>
    <scope>NUCLEOTIDE SEQUENCE [LARGE SCALE GENOMIC DNA]</scope>
    <source>
        <strain>Berkeley</strain>
    </source>
</reference>
<reference key="4">
    <citation type="journal article" date="2002" name="Genome Biol.">
        <title>Annotation of the Drosophila melanogaster euchromatic genome: a systematic review.</title>
        <authorList>
            <person name="Misra S."/>
            <person name="Crosby M.A."/>
            <person name="Mungall C.J."/>
            <person name="Matthews B.B."/>
            <person name="Campbell K.S."/>
            <person name="Hradecky P."/>
            <person name="Huang Y."/>
            <person name="Kaminker J.S."/>
            <person name="Millburn G.H."/>
            <person name="Prochnik S.E."/>
            <person name="Smith C.D."/>
            <person name="Tupy J.L."/>
            <person name="Whitfield E.J."/>
            <person name="Bayraktaroglu L."/>
            <person name="Berman B.P."/>
            <person name="Bettencourt B.R."/>
            <person name="Celniker S.E."/>
            <person name="de Grey A.D.N.J."/>
            <person name="Drysdale R.A."/>
            <person name="Harris N.L."/>
            <person name="Richter J."/>
            <person name="Russo S."/>
            <person name="Schroeder A.J."/>
            <person name="Shu S.Q."/>
            <person name="Stapleton M."/>
            <person name="Yamada C."/>
            <person name="Ashburner M."/>
            <person name="Gelbart W.M."/>
            <person name="Rubin G.M."/>
            <person name="Lewis S.E."/>
        </authorList>
    </citation>
    <scope>GENOME REANNOTATION</scope>
    <source>
        <strain>Berkeley</strain>
    </source>
</reference>
<reference key="5">
    <citation type="journal article" date="2000" name="Science">
        <title>A Drosophila complementary DNA resource.</title>
        <authorList>
            <person name="Rubin G.M."/>
            <person name="Hong L."/>
            <person name="Brokstein P."/>
            <person name="Evans-Holm M."/>
            <person name="Frise E."/>
            <person name="Stapleton M."/>
            <person name="Harvey D.A."/>
        </authorList>
    </citation>
    <scope>NUCLEOTIDE SEQUENCE [LARGE SCALE MRNA]</scope>
    <source>
        <strain>Berkeley</strain>
        <tissue>Head</tissue>
    </source>
</reference>
<reference key="6">
    <citation type="journal article" date="1994" name="J. Mol. Evol.">
        <title>Phylogeny and physiology of Drosophila opsins.</title>
        <authorList>
            <person name="Carulli J.P."/>
            <person name="Chen D.M."/>
            <person name="Stark W.S."/>
            <person name="Hartl D.L."/>
        </authorList>
    </citation>
    <scope>NUCLEOTIDE SEQUENCE [MRNA] OF 34-355</scope>
</reference>
<sequence>MESGNVSSSLFGNVSTALRPEARLSAETRLLGWNVPPEELRHIPEHWLTYPEPPESMNYLLGTLYIFFTLMSMLGNGLVIWVFSAAKSLRTPSNILVINLAFCDFMMMVKTPIFIYNSFHQGYALGHLGCQIFGIIGSYTGIAAGATNAFIAYDRFNVITRPMEGKMTHGKAIAMIIFIYMYATPWVVACYTETWGRFVPEGYLTSCTFDYLTDNFDTRLFVACIFFFSFVCPTTMITYYYSQIVGHVFSHEKALRDQAKKMNVESLRSNVDKNKETAEIRIAKAAITICFLFFCSWTPYGVMSLIGAFGDKTLLTPGATMIPACACKMVACIDPFVYAISHPRYRMELQKRCPWLALNEKAPESSAVASTSTTQEPQQTTAA</sequence>
<proteinExistence type="evidence at protein level"/>
<keyword id="KW-0157">Chromophore</keyword>
<keyword id="KW-1015">Disulfide bond</keyword>
<keyword id="KW-0297">G-protein coupled receptor</keyword>
<keyword id="KW-0325">Glycoprotein</keyword>
<keyword id="KW-0472">Membrane</keyword>
<keyword id="KW-0597">Phosphoprotein</keyword>
<keyword id="KW-0600">Photoreceptor protein</keyword>
<keyword id="KW-0675">Receptor</keyword>
<keyword id="KW-1185">Reference proteome</keyword>
<keyword id="KW-0681">Retinal protein</keyword>
<keyword id="KW-0716">Sensory transduction</keyword>
<keyword id="KW-0807">Transducer</keyword>
<keyword id="KW-0812">Transmembrane</keyword>
<keyword id="KW-1133">Transmembrane helix</keyword>
<keyword id="KW-0844">Vision</keyword>
<dbReference type="EMBL" id="Y00043">
    <property type="protein sequence ID" value="CAA68259.1"/>
    <property type="molecule type" value="Genomic_DNA"/>
</dbReference>
<dbReference type="EMBL" id="M17718">
    <property type="protein sequence ID" value="AAA28854.1"/>
    <property type="molecule type" value="Genomic_DNA"/>
</dbReference>
<dbReference type="EMBL" id="AE014297">
    <property type="protein sequence ID" value="AAG22157.1"/>
    <property type="molecule type" value="Genomic_DNA"/>
</dbReference>
<dbReference type="EMBL" id="AF184224">
    <property type="protein sequence ID" value="AAD55735.1"/>
    <property type="molecule type" value="mRNA"/>
</dbReference>
<dbReference type="PIR" id="A26768">
    <property type="entry name" value="A26768"/>
</dbReference>
<dbReference type="RefSeq" id="NP_524411.1">
    <property type="nucleotide sequence ID" value="NM_079687.3"/>
</dbReference>
<dbReference type="SMR" id="P04950"/>
<dbReference type="BioGRID" id="67383">
    <property type="interactions" value="3"/>
</dbReference>
<dbReference type="FunCoup" id="P04950">
    <property type="interactions" value="16"/>
</dbReference>
<dbReference type="IntAct" id="P04950">
    <property type="interactions" value="1"/>
</dbReference>
<dbReference type="STRING" id="7227.FBpp0083284"/>
<dbReference type="GlyCosmos" id="P04950">
    <property type="glycosylation" value="1 site, No reported glycans"/>
</dbReference>
<dbReference type="GlyGen" id="P04950">
    <property type="glycosylation" value="1 site"/>
</dbReference>
<dbReference type="PaxDb" id="7227-FBpp0083284"/>
<dbReference type="DNASU" id="42398"/>
<dbReference type="EnsemblMetazoa" id="FBtr0083876">
    <property type="protein sequence ID" value="FBpp0083284"/>
    <property type="gene ID" value="FBgn0003249"/>
</dbReference>
<dbReference type="GeneID" id="42398"/>
<dbReference type="KEGG" id="dme:Dmel_CG10888"/>
<dbReference type="AGR" id="FB:FBgn0003249"/>
<dbReference type="CTD" id="42398"/>
<dbReference type="FlyBase" id="FBgn0003249">
    <property type="gene designation" value="Rh3"/>
</dbReference>
<dbReference type="VEuPathDB" id="VectorBase:FBgn0003249"/>
<dbReference type="eggNOG" id="KOG3656">
    <property type="taxonomic scope" value="Eukaryota"/>
</dbReference>
<dbReference type="GeneTree" id="ENSGT01120000271853"/>
<dbReference type="HOGENOM" id="CLU_009579_3_0_1"/>
<dbReference type="InParanoid" id="P04950"/>
<dbReference type="OMA" id="PACACKF"/>
<dbReference type="OrthoDB" id="2105199at2759"/>
<dbReference type="PhylomeDB" id="P04950"/>
<dbReference type="Reactome" id="R-DME-416476">
    <property type="pathway name" value="G alpha (q) signalling events"/>
</dbReference>
<dbReference type="Reactome" id="R-DME-419771">
    <property type="pathway name" value="Opsins"/>
</dbReference>
<dbReference type="SignaLink" id="P04950"/>
<dbReference type="BioGRID-ORCS" id="42398">
    <property type="hits" value="0 hits in 1 CRISPR screen"/>
</dbReference>
<dbReference type="ChiTaRS" id="Rh3">
    <property type="organism name" value="fly"/>
</dbReference>
<dbReference type="GenomeRNAi" id="42398"/>
<dbReference type="PRO" id="PR:P04950"/>
<dbReference type="Proteomes" id="UP000000803">
    <property type="component" value="Chromosome 3R"/>
</dbReference>
<dbReference type="Bgee" id="FBgn0003249">
    <property type="expression patterns" value="Expressed in dorsal margin photoreceptor (Drosophila) in insect head and 79 other cell types or tissues"/>
</dbReference>
<dbReference type="GO" id="GO:0016020">
    <property type="term" value="C:membrane"/>
    <property type="evidence" value="ECO:0000250"/>
    <property type="project" value="FlyBase"/>
</dbReference>
<dbReference type="GO" id="GO:0005886">
    <property type="term" value="C:plasma membrane"/>
    <property type="evidence" value="ECO:0000318"/>
    <property type="project" value="GO_Central"/>
</dbReference>
<dbReference type="GO" id="GO:0008020">
    <property type="term" value="F:G protein-coupled photoreceptor activity"/>
    <property type="evidence" value="ECO:0000314"/>
    <property type="project" value="FlyBase"/>
</dbReference>
<dbReference type="GO" id="GO:0016039">
    <property type="term" value="P:absorption of UV light"/>
    <property type="evidence" value="ECO:0000315"/>
    <property type="project" value="FlyBase"/>
</dbReference>
<dbReference type="GO" id="GO:0071482">
    <property type="term" value="P:cellular response to light stimulus"/>
    <property type="evidence" value="ECO:0000318"/>
    <property type="project" value="GO_Central"/>
</dbReference>
<dbReference type="GO" id="GO:0009589">
    <property type="term" value="P:detection of UV"/>
    <property type="evidence" value="ECO:0000304"/>
    <property type="project" value="FlyBase"/>
</dbReference>
<dbReference type="GO" id="GO:0007186">
    <property type="term" value="P:G protein-coupled receptor signaling pathway"/>
    <property type="evidence" value="ECO:0000250"/>
    <property type="project" value="FlyBase"/>
</dbReference>
<dbReference type="GO" id="GO:0007602">
    <property type="term" value="P:phototransduction"/>
    <property type="evidence" value="ECO:0000318"/>
    <property type="project" value="GO_Central"/>
</dbReference>
<dbReference type="GO" id="GO:0007604">
    <property type="term" value="P:phototransduction, UV"/>
    <property type="evidence" value="ECO:0000314"/>
    <property type="project" value="FlyBase"/>
</dbReference>
<dbReference type="GO" id="GO:0007601">
    <property type="term" value="P:visual perception"/>
    <property type="evidence" value="ECO:0007669"/>
    <property type="project" value="UniProtKB-KW"/>
</dbReference>
<dbReference type="CDD" id="cd15079">
    <property type="entry name" value="7tmA_photoreceptors_insect"/>
    <property type="match status" value="1"/>
</dbReference>
<dbReference type="FunFam" id="1.20.1070.10:FF:000044">
    <property type="entry name" value="Opsin, ultraviolet-sensitive"/>
    <property type="match status" value="1"/>
</dbReference>
<dbReference type="Gene3D" id="1.20.1070.10">
    <property type="entry name" value="Rhodopsin 7-helix transmembrane proteins"/>
    <property type="match status" value="1"/>
</dbReference>
<dbReference type="InterPro" id="IPR050125">
    <property type="entry name" value="GPCR_opsins"/>
</dbReference>
<dbReference type="InterPro" id="IPR000276">
    <property type="entry name" value="GPCR_Rhodpsn"/>
</dbReference>
<dbReference type="InterPro" id="IPR017452">
    <property type="entry name" value="GPCR_Rhodpsn_7TM"/>
</dbReference>
<dbReference type="InterPro" id="IPR001760">
    <property type="entry name" value="Opsin"/>
</dbReference>
<dbReference type="InterPro" id="IPR027430">
    <property type="entry name" value="Retinal_BS"/>
</dbReference>
<dbReference type="PANTHER" id="PTHR24240">
    <property type="entry name" value="OPSIN"/>
    <property type="match status" value="1"/>
</dbReference>
<dbReference type="Pfam" id="PF00001">
    <property type="entry name" value="7tm_1"/>
    <property type="match status" value="1"/>
</dbReference>
<dbReference type="PRINTS" id="PR00237">
    <property type="entry name" value="GPCRRHODOPSN"/>
</dbReference>
<dbReference type="PRINTS" id="PR00577">
    <property type="entry name" value="OPSINRH3RH4"/>
</dbReference>
<dbReference type="SUPFAM" id="SSF81321">
    <property type="entry name" value="Family A G protein-coupled receptor-like"/>
    <property type="match status" value="1"/>
</dbReference>
<dbReference type="PROSITE" id="PS00237">
    <property type="entry name" value="G_PROTEIN_RECEP_F1_1"/>
    <property type="match status" value="1"/>
</dbReference>
<dbReference type="PROSITE" id="PS50262">
    <property type="entry name" value="G_PROTEIN_RECEP_F1_2"/>
    <property type="match status" value="1"/>
</dbReference>
<dbReference type="PROSITE" id="PS00238">
    <property type="entry name" value="OPSIN"/>
    <property type="match status" value="1"/>
</dbReference>